<protein>
    <recommendedName>
        <fullName>Non-motile and phage-resistance protein</fullName>
        <ecNumber>2.7.13.3</ecNumber>
    </recommendedName>
</protein>
<gene>
    <name type="primary">pleC</name>
    <name type="ordered locus">CC_2482</name>
</gene>
<proteinExistence type="evidence at protein level"/>
<evidence type="ECO:0000255" key="1"/>
<evidence type="ECO:0000255" key="2">
    <source>
        <dbReference type="PROSITE-ProRule" id="PRU00107"/>
    </source>
</evidence>
<evidence type="ECO:0000255" key="3">
    <source>
        <dbReference type="PROSITE-ProRule" id="PRU00140"/>
    </source>
</evidence>
<evidence type="ECO:0000305" key="4"/>
<organism>
    <name type="scientific">Caulobacter vibrioides (strain ATCC 19089 / CIP 103742 / CB 15)</name>
    <name type="common">Caulobacter crescentus</name>
    <dbReference type="NCBI Taxonomy" id="190650"/>
    <lineage>
        <taxon>Bacteria</taxon>
        <taxon>Pseudomonadati</taxon>
        <taxon>Pseudomonadota</taxon>
        <taxon>Alphaproteobacteria</taxon>
        <taxon>Caulobacterales</taxon>
        <taxon>Caulobacteraceae</taxon>
        <taxon>Caulobacter</taxon>
    </lineage>
</organism>
<sequence length="842" mass="89560">MGRHGGPAAAGPTAPSAVRAKAVNAPSQVFVRIAILAALLLLAVYTAFGVHRLQREAMAQPGGAPLAAKADLIAGRVDANLAAQRAGLSAAADLLKRDPGATMDAAETTLRAAGGEAAAVAVVSEAGVVAVAGRDDGADWKAAALAAGASGRTNWVGSVGETGRLYVATTTSLDRARAFVIASGDASRLVADPEKGESGALALPDGKLIAARGRGVQGAGALREAFALSIEDLGDGPAAVRGQAADGALLDVAVRPVAQGALLAVAAAPTRSVANLDRQVMEGAFSLLVPLGVGIALALLLMIQSRKAEVAHREFIDSERRFRLAVEAARCGIWEWDLNGDQVYLSDVTGAMFGWGGGGVVSGQDLLERISIDHRERVRQALANAAMYGAFDVSFRVPASEQGARSLWIDARGQGFGKPGSEGHARIIGVALDVTEERIAQARAQAAENRLRDAIESVSEAFVLWDRQGRLLMCNRNYRSVFSLEPKILKPGAARAEVNRFAALAIKQDHPAPDGAKGVREAEMMDGRWIQISERRTAEGGLVMTAADITAIKTQEEARRRNEEQLQNAVAGLERSQEQLAELARKYETEKVKAESANKAKSEFLANMSHELRTPLNAINGFSEIMMNEMFGPLGDQRYKGYSQDIHSSGQHLLALINDILDMSKIEAGKMNLKFESMHLEDVAEDAVRLVRNRAEAAGLKLDIDFPQLPEIEADYRAVKQVLLNLLSNAIKFTPRAGSVTVRAEVRRDPFGDLIKVSVTDTGIGIAKEDLARLAKPFEQVESQFSKTTQGTGLGLALTKSLITMHDGVLEMHSTPGEGTTVSFTLPVRHSDQKITRDFVAA</sequence>
<reference key="1">
    <citation type="journal article" date="1993" name="Proc. Natl. Acad. Sci. U.S.A.">
        <title>A histidine protein kinase is involved in polar organelle development in Caulobacter crescentus.</title>
        <authorList>
            <person name="Wang S.P."/>
            <person name="Sharma P.L."/>
            <person name="Schoenlein P.V."/>
            <person name="Ely B."/>
        </authorList>
    </citation>
    <scope>NUCLEOTIDE SEQUENCE [GENOMIC DNA]</scope>
    <source>
        <strain>ATCC 19089 / CIP 103742 / CB 15</strain>
    </source>
</reference>
<reference key="2">
    <citation type="journal article" date="2001" name="Proc. Natl. Acad. Sci. U.S.A.">
        <title>Complete genome sequence of Caulobacter crescentus.</title>
        <authorList>
            <person name="Nierman W.C."/>
            <person name="Feldblyum T.V."/>
            <person name="Laub M.T."/>
            <person name="Paulsen I.T."/>
            <person name="Nelson K.E."/>
            <person name="Eisen J.A."/>
            <person name="Heidelberg J.F."/>
            <person name="Alley M.R.K."/>
            <person name="Ohta N."/>
            <person name="Maddock J.R."/>
            <person name="Potocka I."/>
            <person name="Nelson W.C."/>
            <person name="Newton A."/>
            <person name="Stephens C."/>
            <person name="Phadke N.D."/>
            <person name="Ely B."/>
            <person name="DeBoy R.T."/>
            <person name="Dodson R.J."/>
            <person name="Durkin A.S."/>
            <person name="Gwinn M.L."/>
            <person name="Haft D.H."/>
            <person name="Kolonay J.F."/>
            <person name="Smit J."/>
            <person name="Craven M.B."/>
            <person name="Khouri H.M."/>
            <person name="Shetty J."/>
            <person name="Berry K.J."/>
            <person name="Utterback T.R."/>
            <person name="Tran K."/>
            <person name="Wolf A.M."/>
            <person name="Vamathevan J.J."/>
            <person name="Ermolaeva M.D."/>
            <person name="White O."/>
            <person name="Salzberg S.L."/>
            <person name="Venter J.C."/>
            <person name="Shapiro L."/>
            <person name="Fraser C.M."/>
        </authorList>
    </citation>
    <scope>NUCLEOTIDE SEQUENCE [LARGE SCALE GENOMIC DNA]</scope>
    <source>
        <strain>ATCC 19089 / CIP 103742 / CB 15</strain>
    </source>
</reference>
<reference key="3">
    <citation type="journal article" date="2004" name="Genes Dev.">
        <title>Cell cycle-dependent dynamic localization of a bacterial response regulator with a novel di-guanylate cyclase output domain.</title>
        <authorList>
            <person name="Paul R."/>
            <person name="Weiser S."/>
            <person name="Amiot N.C."/>
            <person name="Chan C."/>
            <person name="Schirmer T."/>
            <person name="Giese B."/>
            <person name="Jenal U."/>
        </authorList>
    </citation>
    <scope>PHOSPHORYLATION OF PLED</scope>
</reference>
<feature type="chain" id="PRO_0000074852" description="Non-motile and phage-resistance protein">
    <location>
        <begin position="1"/>
        <end position="842"/>
    </location>
</feature>
<feature type="transmembrane region" description="Helical" evidence="1">
    <location>
        <begin position="29"/>
        <end position="50"/>
    </location>
</feature>
<feature type="transmembrane region" description="Helical" evidence="1">
    <location>
        <begin position="283"/>
        <end position="303"/>
    </location>
</feature>
<feature type="transmembrane region" description="Helical" evidence="1">
    <location>
        <begin position="343"/>
        <end position="363"/>
    </location>
</feature>
<feature type="domain" description="PAS" evidence="3">
    <location>
        <begin position="318"/>
        <end position="389"/>
    </location>
</feature>
<feature type="domain" description="Histidine kinase" evidence="2">
    <location>
        <begin position="607"/>
        <end position="830"/>
    </location>
</feature>
<feature type="modified residue" description="Phosphohistidine; by autocatalysis" evidence="2">
    <location>
        <position position="610"/>
    </location>
</feature>
<feature type="sequence conflict" description="In Ref. 1; AAA23052." evidence="4" ref="1">
    <original>A</original>
    <variation>V</variation>
    <location>
        <position position="744"/>
    </location>
</feature>
<accession>P37894</accession>
<keyword id="KW-0067">ATP-binding</keyword>
<keyword id="KW-0131">Cell cycle</keyword>
<keyword id="KW-1003">Cell membrane</keyword>
<keyword id="KW-0221">Differentiation</keyword>
<keyword id="KW-0418">Kinase</keyword>
<keyword id="KW-0472">Membrane</keyword>
<keyword id="KW-0547">Nucleotide-binding</keyword>
<keyword id="KW-0597">Phosphoprotein</keyword>
<keyword id="KW-1185">Reference proteome</keyword>
<keyword id="KW-0808">Transferase</keyword>
<keyword id="KW-0812">Transmembrane</keyword>
<keyword id="KW-1133">Transmembrane helix</keyword>
<keyword id="KW-0902">Two-component regulatory system</keyword>
<name>PLEC_CAUVC</name>
<comment type="function">
    <text>Member of the two-component regulatory system involved in the regulation of polar organelle development. PleC functions as a membrane-associated protein kinase that transfers phosphate to the response regulator PleD, leading to its activation.</text>
</comment>
<comment type="catalytic activity">
    <reaction>
        <text>ATP + protein L-histidine = ADP + protein N-phospho-L-histidine.</text>
        <dbReference type="EC" id="2.7.13.3"/>
    </reaction>
</comment>
<comment type="interaction">
    <interactant intactId="EBI-1784742">
        <id>P37894</id>
    </interactant>
    <interactant intactId="EBI-1784732">
        <id>Q9A5I5</id>
        <label>pleD</label>
    </interactant>
    <organismsDiffer>false</organismsDiffer>
    <experiments>4</experiments>
</comment>
<comment type="interaction">
    <interactant intactId="EBI-1784742">
        <id>P37894</id>
    </interactant>
    <interactant intactId="EBI-1784754">
        <id>Q45976</id>
        <label>divK</label>
    </interactant>
    <organismsDiffer>true</organismsDiffer>
    <experiments>8</experiments>
</comment>
<comment type="subcellular location">
    <subcellularLocation>
        <location evidence="4">Cell membrane</location>
        <topology evidence="4">Multi-pass membrane protein</topology>
    </subcellularLocation>
</comment>
<dbReference type="EC" id="2.7.13.3"/>
<dbReference type="EMBL" id="M91449">
    <property type="protein sequence ID" value="AAA23052.1"/>
    <property type="molecule type" value="Genomic_DNA"/>
</dbReference>
<dbReference type="EMBL" id="AE005673">
    <property type="protein sequence ID" value="AAK24453.1"/>
    <property type="molecule type" value="Genomic_DNA"/>
</dbReference>
<dbReference type="PIR" id="A87557">
    <property type="entry name" value="A87557"/>
</dbReference>
<dbReference type="PIR" id="S27533">
    <property type="entry name" value="S27533"/>
</dbReference>
<dbReference type="RefSeq" id="NP_421285.1">
    <property type="nucleotide sequence ID" value="NC_002696.2"/>
</dbReference>
<dbReference type="RefSeq" id="WP_010920340.1">
    <property type="nucleotide sequence ID" value="NC_002696.2"/>
</dbReference>
<dbReference type="SMR" id="P37894"/>
<dbReference type="DIP" id="DIP-44286N"/>
<dbReference type="IntAct" id="P37894">
    <property type="interactions" value="3"/>
</dbReference>
<dbReference type="MINT" id="P37894"/>
<dbReference type="STRING" id="190650.CC_2482"/>
<dbReference type="EnsemblBacteria" id="AAK24453">
    <property type="protein sequence ID" value="AAK24453"/>
    <property type="gene ID" value="CC_2482"/>
</dbReference>
<dbReference type="KEGG" id="ccr:CC_2482"/>
<dbReference type="PATRIC" id="fig|190650.5.peg.2500"/>
<dbReference type="eggNOG" id="COG2202">
    <property type="taxonomic scope" value="Bacteria"/>
</dbReference>
<dbReference type="eggNOG" id="COG2205">
    <property type="taxonomic scope" value="Bacteria"/>
</dbReference>
<dbReference type="HOGENOM" id="CLU_000445_114_71_5"/>
<dbReference type="BioCyc" id="CAULO:CC2482-MONOMER"/>
<dbReference type="Proteomes" id="UP000001816">
    <property type="component" value="Chromosome"/>
</dbReference>
<dbReference type="GO" id="GO:0005886">
    <property type="term" value="C:plasma membrane"/>
    <property type="evidence" value="ECO:0007669"/>
    <property type="project" value="UniProtKB-SubCell"/>
</dbReference>
<dbReference type="GO" id="GO:0005524">
    <property type="term" value="F:ATP binding"/>
    <property type="evidence" value="ECO:0007669"/>
    <property type="project" value="UniProtKB-KW"/>
</dbReference>
<dbReference type="GO" id="GO:0009927">
    <property type="term" value="F:histidine phosphotransfer kinase activity"/>
    <property type="evidence" value="ECO:0007669"/>
    <property type="project" value="TreeGrafter"/>
</dbReference>
<dbReference type="GO" id="GO:0000155">
    <property type="term" value="F:phosphorelay sensor kinase activity"/>
    <property type="evidence" value="ECO:0000314"/>
    <property type="project" value="CACAO"/>
</dbReference>
<dbReference type="GO" id="GO:0030154">
    <property type="term" value="P:cell differentiation"/>
    <property type="evidence" value="ECO:0007669"/>
    <property type="project" value="UniProtKB-KW"/>
</dbReference>
<dbReference type="GO" id="GO:0000160">
    <property type="term" value="P:phosphorelay signal transduction system"/>
    <property type="evidence" value="ECO:0000314"/>
    <property type="project" value="CACAO"/>
</dbReference>
<dbReference type="GO" id="GO:0006355">
    <property type="term" value="P:regulation of DNA-templated transcription"/>
    <property type="evidence" value="ECO:0007669"/>
    <property type="project" value="InterPro"/>
</dbReference>
<dbReference type="CDD" id="cd16922">
    <property type="entry name" value="HATPase_EvgS-ArcB-TorS-like"/>
    <property type="match status" value="1"/>
</dbReference>
<dbReference type="CDD" id="cd00082">
    <property type="entry name" value="HisKA"/>
    <property type="match status" value="1"/>
</dbReference>
<dbReference type="FunFam" id="3.30.565.10:FF:000010">
    <property type="entry name" value="Sensor histidine kinase RcsC"/>
    <property type="match status" value="1"/>
</dbReference>
<dbReference type="FunFam" id="1.10.287.130:FF:000038">
    <property type="entry name" value="Sensory transduction histidine kinase"/>
    <property type="match status" value="1"/>
</dbReference>
<dbReference type="Gene3D" id="1.10.287.130">
    <property type="match status" value="1"/>
</dbReference>
<dbReference type="Gene3D" id="3.30.565.10">
    <property type="entry name" value="Histidine kinase-like ATPase, C-terminal domain"/>
    <property type="match status" value="1"/>
</dbReference>
<dbReference type="Gene3D" id="3.30.450.20">
    <property type="entry name" value="PAS domain"/>
    <property type="match status" value="2"/>
</dbReference>
<dbReference type="InterPro" id="IPR036890">
    <property type="entry name" value="HATPase_C_sf"/>
</dbReference>
<dbReference type="InterPro" id="IPR005467">
    <property type="entry name" value="His_kinase_dom"/>
</dbReference>
<dbReference type="InterPro" id="IPR003661">
    <property type="entry name" value="HisK_dim/P_dom"/>
</dbReference>
<dbReference type="InterPro" id="IPR036097">
    <property type="entry name" value="HisK_dim/P_sf"/>
</dbReference>
<dbReference type="InterPro" id="IPR000014">
    <property type="entry name" value="PAS"/>
</dbReference>
<dbReference type="InterPro" id="IPR035965">
    <property type="entry name" value="PAS-like_dom_sf"/>
</dbReference>
<dbReference type="InterPro" id="IPR013767">
    <property type="entry name" value="PAS_fold"/>
</dbReference>
<dbReference type="InterPro" id="IPR004358">
    <property type="entry name" value="Sig_transdc_His_kin-like_C"/>
</dbReference>
<dbReference type="PANTHER" id="PTHR43047:SF72">
    <property type="entry name" value="OSMOSENSING HISTIDINE PROTEIN KINASE SLN1"/>
    <property type="match status" value="1"/>
</dbReference>
<dbReference type="PANTHER" id="PTHR43047">
    <property type="entry name" value="TWO-COMPONENT HISTIDINE PROTEIN KINASE"/>
    <property type="match status" value="1"/>
</dbReference>
<dbReference type="Pfam" id="PF02518">
    <property type="entry name" value="HATPase_c"/>
    <property type="match status" value="1"/>
</dbReference>
<dbReference type="Pfam" id="PF00512">
    <property type="entry name" value="HisKA"/>
    <property type="match status" value="1"/>
</dbReference>
<dbReference type="Pfam" id="PF00989">
    <property type="entry name" value="PAS"/>
    <property type="match status" value="1"/>
</dbReference>
<dbReference type="Pfam" id="PF12860">
    <property type="entry name" value="PAS_7"/>
    <property type="match status" value="1"/>
</dbReference>
<dbReference type="PRINTS" id="PR00344">
    <property type="entry name" value="BCTRLSENSOR"/>
</dbReference>
<dbReference type="SMART" id="SM00387">
    <property type="entry name" value="HATPase_c"/>
    <property type="match status" value="1"/>
</dbReference>
<dbReference type="SMART" id="SM00388">
    <property type="entry name" value="HisKA"/>
    <property type="match status" value="1"/>
</dbReference>
<dbReference type="SMART" id="SM00091">
    <property type="entry name" value="PAS"/>
    <property type="match status" value="2"/>
</dbReference>
<dbReference type="SUPFAM" id="SSF55874">
    <property type="entry name" value="ATPase domain of HSP90 chaperone/DNA topoisomerase II/histidine kinase"/>
    <property type="match status" value="1"/>
</dbReference>
<dbReference type="SUPFAM" id="SSF47384">
    <property type="entry name" value="Homodimeric domain of signal transducing histidine kinase"/>
    <property type="match status" value="1"/>
</dbReference>
<dbReference type="SUPFAM" id="SSF55785">
    <property type="entry name" value="PYP-like sensor domain (PAS domain)"/>
    <property type="match status" value="2"/>
</dbReference>
<dbReference type="PROSITE" id="PS50109">
    <property type="entry name" value="HIS_KIN"/>
    <property type="match status" value="1"/>
</dbReference>
<dbReference type="PROSITE" id="PS50112">
    <property type="entry name" value="PAS"/>
    <property type="match status" value="1"/>
</dbReference>